<name>FAKD1_HUMAN</name>
<feature type="transit peptide" description="Mitochondrion" evidence="8">
    <location>
        <begin position="1"/>
        <end status="unknown"/>
    </location>
</feature>
<feature type="chain" id="PRO_0000284710" description="FAST kinase domain-containing protein 1, mitochondrial">
    <location>
        <begin status="unknown"/>
        <end position="847"/>
    </location>
</feature>
<feature type="domain" description="RAP" evidence="1">
    <location>
        <begin position="777"/>
        <end position="837"/>
    </location>
</feature>
<feature type="modified residue" description="N6-acetyllysine" evidence="9">
    <location>
        <position position="360"/>
    </location>
</feature>
<feature type="splice variant" id="VSP_024617" description="In isoform 2." evidence="7">
    <original>ILSPSRSARVQFHLMELNRSVCLECPEFQIPWFHDRFCQQYNKG</original>
    <variation>S</variation>
    <location>
        <begin position="649"/>
        <end position="692"/>
    </location>
</feature>
<feature type="sequence variant" id="VAR_031806" description="In dbSNP:rs12618227.">
    <original>E</original>
    <variation>Q</variation>
    <location>
        <position position="384"/>
    </location>
</feature>
<feature type="sequence variant" id="VAR_031807" description="In dbSNP:rs35106223.">
    <original>C</original>
    <variation>G</variation>
    <location>
        <position position="446"/>
    </location>
</feature>
<feature type="sequence variant" id="VAR_031808" description="In dbSNP:rs2253680." evidence="2 3">
    <original>M</original>
    <variation>V</variation>
    <location>
        <position position="467"/>
    </location>
</feature>
<feature type="sequence conflict" description="In Ref. 1; BAB85043." evidence="8" ref="1">
    <original>V</original>
    <variation>M</variation>
    <location>
        <position position="213"/>
    </location>
</feature>
<feature type="sequence conflict" description="In Ref. 1; BAB85043." evidence="8" ref="1">
    <original>V</original>
    <variation>A</variation>
    <location>
        <position position="228"/>
    </location>
</feature>
<feature type="sequence conflict" description="In Ref. 1; BAB15168." evidence="8" ref="1">
    <original>M</original>
    <variation>T</variation>
    <location>
        <position position="288"/>
    </location>
</feature>
<feature type="sequence conflict" description="In Ref. 1; BAB85043." evidence="8" ref="1">
    <original>L</original>
    <variation>P</variation>
    <location>
        <position position="293"/>
    </location>
</feature>
<feature type="sequence conflict" description="In Ref. 4; BAB47429." evidence="8" ref="4">
    <original>E</original>
    <variation>EMPWESNIEIVGSRLPPGAERIALEFLDSKA</variation>
    <location>
        <position position="756"/>
    </location>
</feature>
<proteinExistence type="evidence at protein level"/>
<organism>
    <name type="scientific">Homo sapiens</name>
    <name type="common">Human</name>
    <dbReference type="NCBI Taxonomy" id="9606"/>
    <lineage>
        <taxon>Eukaryota</taxon>
        <taxon>Metazoa</taxon>
        <taxon>Chordata</taxon>
        <taxon>Craniata</taxon>
        <taxon>Vertebrata</taxon>
        <taxon>Euteleostomi</taxon>
        <taxon>Mammalia</taxon>
        <taxon>Eutheria</taxon>
        <taxon>Euarchontoglires</taxon>
        <taxon>Primates</taxon>
        <taxon>Haplorrhini</taxon>
        <taxon>Catarrhini</taxon>
        <taxon>Hominidae</taxon>
        <taxon>Homo</taxon>
    </lineage>
</organism>
<evidence type="ECO:0000255" key="1">
    <source>
        <dbReference type="PROSITE-ProRule" id="PRU00619"/>
    </source>
</evidence>
<evidence type="ECO:0000269" key="2">
    <source>
    </source>
</evidence>
<evidence type="ECO:0000269" key="3">
    <source>
    </source>
</evidence>
<evidence type="ECO:0000269" key="4">
    <source>
    </source>
</evidence>
<evidence type="ECO:0000269" key="5">
    <source>
    </source>
</evidence>
<evidence type="ECO:0000269" key="6">
    <source>
    </source>
</evidence>
<evidence type="ECO:0000303" key="7">
    <source>
    </source>
</evidence>
<evidence type="ECO:0000305" key="8"/>
<evidence type="ECO:0007744" key="9">
    <source>
    </source>
</evidence>
<comment type="function">
    <text evidence="5 6">Involved in the down-regulation of mitochondrial MT-ND3 mRNA levels which leads to decreased respiratory complex I abundance and activity.</text>
</comment>
<comment type="interaction">
    <interactant intactId="EBI-3957005">
        <id>Q53R41</id>
    </interactant>
    <interactant intactId="EBI-1054228">
        <id>P41091</id>
        <label>EIF2S3</label>
    </interactant>
    <organismsDiffer>false</organismsDiffer>
    <experiments>3</experiments>
</comment>
<comment type="interaction">
    <interactant intactId="EBI-3957005">
        <id>Q53R41</id>
    </interactant>
    <interactant intactId="EBI-744302">
        <id>P14136</id>
        <label>GFAP</label>
    </interactant>
    <organismsDiffer>false</organismsDiffer>
    <experiments>3</experiments>
</comment>
<comment type="interaction">
    <interactant intactId="EBI-3957005">
        <id>Q53R41</id>
    </interactant>
    <interactant intactId="EBI-747754">
        <id>P28799</id>
        <label>GRN</label>
    </interactant>
    <organismsDiffer>false</organismsDiffer>
    <experiments>3</experiments>
</comment>
<comment type="interaction">
    <interactant intactId="EBI-3957005">
        <id>Q53R41</id>
    </interactant>
    <interactant intactId="EBI-356991">
        <id>P54652</id>
        <label>HSPA2</label>
    </interactant>
    <organismsDiffer>false</organismsDiffer>
    <experiments>3</experiments>
</comment>
<comment type="interaction">
    <interactant intactId="EBI-3957005">
        <id>Q53R41</id>
    </interactant>
    <interactant intactId="EBI-466029">
        <id>P42858</id>
        <label>HTT</label>
    </interactant>
    <organismsDiffer>false</organismsDiffer>
    <experiments>9</experiments>
</comment>
<comment type="interaction">
    <interactant intactId="EBI-3957005">
        <id>Q53R41</id>
    </interactant>
    <interactant intactId="EBI-1055254">
        <id>Q8WXH2</id>
        <label>JPH3</label>
    </interactant>
    <organismsDiffer>false</organismsDiffer>
    <experiments>3</experiments>
</comment>
<comment type="interaction">
    <interactant intactId="EBI-3957005">
        <id>Q53R41</id>
    </interactant>
    <interactant intactId="EBI-10975473">
        <id>O60333-2</id>
        <label>KIF1B</label>
    </interactant>
    <organismsDiffer>false</organismsDiffer>
    <experiments>3</experiments>
</comment>
<comment type="interaction">
    <interactant intactId="EBI-3957005">
        <id>Q53R41</id>
    </interactant>
    <interactant intactId="EBI-475646">
        <id>P07196</id>
        <label>NEFL</label>
    </interactant>
    <organismsDiffer>false</organismsDiffer>
    <experiments>3</experiments>
</comment>
<comment type="interaction">
    <interactant intactId="EBI-3957005">
        <id>Q53R41</id>
    </interactant>
    <interactant intactId="EBI-395883">
        <id>P07237</id>
        <label>P4HB</label>
    </interactant>
    <organismsDiffer>false</organismsDiffer>
    <experiments>3</experiments>
</comment>
<comment type="interaction">
    <interactant intactId="EBI-3957005">
        <id>Q53R41</id>
    </interactant>
    <interactant intactId="EBI-25892254">
        <id>Q9P1I4</id>
        <label>ST13</label>
    </interactant>
    <organismsDiffer>false</organismsDiffer>
    <experiments>3</experiments>
</comment>
<comment type="interaction">
    <interactant intactId="EBI-3957005">
        <id>Q53R41</id>
    </interactant>
    <interactant intactId="EBI-720609">
        <id>O76024</id>
        <label>WFS1</label>
    </interactant>
    <organismsDiffer>false</organismsDiffer>
    <experiments>3</experiments>
</comment>
<comment type="subcellular location">
    <subcellularLocation>
        <location evidence="4 5 6">Mitochondrion</location>
    </subcellularLocation>
    <text evidence="6">Preferentially localizes to mitochondrial RNA granules, platforms for post-transcriptional RNA modification and ribosome assembly (PubMed:28335001).</text>
</comment>
<comment type="alternative products">
    <event type="alternative splicing"/>
    <isoform>
        <id>Q53R41-1</id>
        <name>1</name>
        <sequence type="displayed"/>
    </isoform>
    <isoform>
        <id>Q53R41-2</id>
        <name>2</name>
        <sequence type="described" ref="VSP_024617"/>
    </isoform>
</comment>
<comment type="tissue specificity">
    <text evidence="4">Expression detected in spleen, thymus, testis, ovary, colon, heart, smooth muscle, kidney, brain, lung, liver and white adipose tissue with highest expression in heart.</text>
</comment>
<comment type="domain">
    <text evidence="6">The RAP domain is essential to regulate MT-ND3 mRNA levels.</text>
</comment>
<comment type="similarity">
    <text evidence="8">Belongs to the FAST kinase family.</text>
</comment>
<comment type="caution">
    <text evidence="8">It is uncertain whether Met-1 or Met-15 is the initiator.</text>
</comment>
<comment type="sequence caution" evidence="8">
    <conflict type="erroneous initiation">
        <sequence resource="EMBL-CDS" id="AAH32687"/>
    </conflict>
</comment>
<comment type="sequence caution" evidence="8">
    <conflict type="erroneous initiation">
        <sequence resource="EMBL-CDS" id="BAB15168"/>
    </conflict>
</comment>
<accession>Q53R41</accession>
<accession>Q8N583</accession>
<accession>Q8TEA9</accession>
<accession>Q96JM5</accession>
<accession>Q96N71</accession>
<accession>Q9H6T4</accession>
<reference key="1">
    <citation type="journal article" date="2004" name="Nat. Genet.">
        <title>Complete sequencing and characterization of 21,243 full-length human cDNAs.</title>
        <authorList>
            <person name="Ota T."/>
            <person name="Suzuki Y."/>
            <person name="Nishikawa T."/>
            <person name="Otsuki T."/>
            <person name="Sugiyama T."/>
            <person name="Irie R."/>
            <person name="Wakamatsu A."/>
            <person name="Hayashi K."/>
            <person name="Sato H."/>
            <person name="Nagai K."/>
            <person name="Kimura K."/>
            <person name="Makita H."/>
            <person name="Sekine M."/>
            <person name="Obayashi M."/>
            <person name="Nishi T."/>
            <person name="Shibahara T."/>
            <person name="Tanaka T."/>
            <person name="Ishii S."/>
            <person name="Yamamoto J."/>
            <person name="Saito K."/>
            <person name="Kawai Y."/>
            <person name="Isono Y."/>
            <person name="Nakamura Y."/>
            <person name="Nagahari K."/>
            <person name="Murakami K."/>
            <person name="Yasuda T."/>
            <person name="Iwayanagi T."/>
            <person name="Wagatsuma M."/>
            <person name="Shiratori A."/>
            <person name="Sudo H."/>
            <person name="Hosoiri T."/>
            <person name="Kaku Y."/>
            <person name="Kodaira H."/>
            <person name="Kondo H."/>
            <person name="Sugawara M."/>
            <person name="Takahashi M."/>
            <person name="Kanda K."/>
            <person name="Yokoi T."/>
            <person name="Furuya T."/>
            <person name="Kikkawa E."/>
            <person name="Omura Y."/>
            <person name="Abe K."/>
            <person name="Kamihara K."/>
            <person name="Katsuta N."/>
            <person name="Sato K."/>
            <person name="Tanikawa M."/>
            <person name="Yamazaki M."/>
            <person name="Ninomiya K."/>
            <person name="Ishibashi T."/>
            <person name="Yamashita H."/>
            <person name="Murakawa K."/>
            <person name="Fujimori K."/>
            <person name="Tanai H."/>
            <person name="Kimata M."/>
            <person name="Watanabe M."/>
            <person name="Hiraoka S."/>
            <person name="Chiba Y."/>
            <person name="Ishida S."/>
            <person name="Ono Y."/>
            <person name="Takiguchi S."/>
            <person name="Watanabe S."/>
            <person name="Yosida M."/>
            <person name="Hotuta T."/>
            <person name="Kusano J."/>
            <person name="Kanehori K."/>
            <person name="Takahashi-Fujii A."/>
            <person name="Hara H."/>
            <person name="Tanase T.-O."/>
            <person name="Nomura Y."/>
            <person name="Togiya S."/>
            <person name="Komai F."/>
            <person name="Hara R."/>
            <person name="Takeuchi K."/>
            <person name="Arita M."/>
            <person name="Imose N."/>
            <person name="Musashino K."/>
            <person name="Yuuki H."/>
            <person name="Oshima A."/>
            <person name="Sasaki N."/>
            <person name="Aotsuka S."/>
            <person name="Yoshikawa Y."/>
            <person name="Matsunawa H."/>
            <person name="Ichihara T."/>
            <person name="Shiohata N."/>
            <person name="Sano S."/>
            <person name="Moriya S."/>
            <person name="Momiyama H."/>
            <person name="Satoh N."/>
            <person name="Takami S."/>
            <person name="Terashima Y."/>
            <person name="Suzuki O."/>
            <person name="Nakagawa S."/>
            <person name="Senoh A."/>
            <person name="Mizoguchi H."/>
            <person name="Goto Y."/>
            <person name="Shimizu F."/>
            <person name="Wakebe H."/>
            <person name="Hishigaki H."/>
            <person name="Watanabe T."/>
            <person name="Sugiyama A."/>
            <person name="Takemoto M."/>
            <person name="Kawakami B."/>
            <person name="Yamazaki M."/>
            <person name="Watanabe K."/>
            <person name="Kumagai A."/>
            <person name="Itakura S."/>
            <person name="Fukuzumi Y."/>
            <person name="Fujimori Y."/>
            <person name="Komiyama M."/>
            <person name="Tashiro H."/>
            <person name="Tanigami A."/>
            <person name="Fujiwara T."/>
            <person name="Ono T."/>
            <person name="Yamada K."/>
            <person name="Fujii Y."/>
            <person name="Ozaki K."/>
            <person name="Hirao M."/>
            <person name="Ohmori Y."/>
            <person name="Kawabata A."/>
            <person name="Hikiji T."/>
            <person name="Kobatake N."/>
            <person name="Inagaki H."/>
            <person name="Ikema Y."/>
            <person name="Okamoto S."/>
            <person name="Okitani R."/>
            <person name="Kawakami T."/>
            <person name="Noguchi S."/>
            <person name="Itoh T."/>
            <person name="Shigeta K."/>
            <person name="Senba T."/>
            <person name="Matsumura K."/>
            <person name="Nakajima Y."/>
            <person name="Mizuno T."/>
            <person name="Morinaga M."/>
            <person name="Sasaki M."/>
            <person name="Togashi T."/>
            <person name="Oyama M."/>
            <person name="Hata H."/>
            <person name="Watanabe M."/>
            <person name="Komatsu T."/>
            <person name="Mizushima-Sugano J."/>
            <person name="Satoh T."/>
            <person name="Shirai Y."/>
            <person name="Takahashi Y."/>
            <person name="Nakagawa K."/>
            <person name="Okumura K."/>
            <person name="Nagase T."/>
            <person name="Nomura N."/>
            <person name="Kikuchi H."/>
            <person name="Masuho Y."/>
            <person name="Yamashita R."/>
            <person name="Nakai K."/>
            <person name="Yada T."/>
            <person name="Nakamura Y."/>
            <person name="Ohara O."/>
            <person name="Isogai T."/>
            <person name="Sugano S."/>
        </authorList>
    </citation>
    <scope>NUCLEOTIDE SEQUENCE [LARGE SCALE MRNA] (ISOFORM 2)</scope>
    <scope>NUCLEOTIDE SEQUENCE [LARGE SCALE MRNA] OF 166-847 (ISOFORM 1)</scope>
    <scope>VARIANT VAL-467</scope>
    <source>
        <tissue>Mammary gland</tissue>
    </source>
</reference>
<reference key="2">
    <citation type="journal article" date="2005" name="Nature">
        <title>Generation and annotation of the DNA sequences of human chromosomes 2 and 4.</title>
        <authorList>
            <person name="Hillier L.W."/>
            <person name="Graves T.A."/>
            <person name="Fulton R.S."/>
            <person name="Fulton L.A."/>
            <person name="Pepin K.H."/>
            <person name="Minx P."/>
            <person name="Wagner-McPherson C."/>
            <person name="Layman D."/>
            <person name="Wylie K."/>
            <person name="Sekhon M."/>
            <person name="Becker M.C."/>
            <person name="Fewell G.A."/>
            <person name="Delehaunty K.D."/>
            <person name="Miner T.L."/>
            <person name="Nash W.E."/>
            <person name="Kremitzki C."/>
            <person name="Oddy L."/>
            <person name="Du H."/>
            <person name="Sun H."/>
            <person name="Bradshaw-Cordum H."/>
            <person name="Ali J."/>
            <person name="Carter J."/>
            <person name="Cordes M."/>
            <person name="Harris A."/>
            <person name="Isak A."/>
            <person name="van Brunt A."/>
            <person name="Nguyen C."/>
            <person name="Du F."/>
            <person name="Courtney L."/>
            <person name="Kalicki J."/>
            <person name="Ozersky P."/>
            <person name="Abbott S."/>
            <person name="Armstrong J."/>
            <person name="Belter E.A."/>
            <person name="Caruso L."/>
            <person name="Cedroni M."/>
            <person name="Cotton M."/>
            <person name="Davidson T."/>
            <person name="Desai A."/>
            <person name="Elliott G."/>
            <person name="Erb T."/>
            <person name="Fronick C."/>
            <person name="Gaige T."/>
            <person name="Haakenson W."/>
            <person name="Haglund K."/>
            <person name="Holmes A."/>
            <person name="Harkins R."/>
            <person name="Kim K."/>
            <person name="Kruchowski S.S."/>
            <person name="Strong C.M."/>
            <person name="Grewal N."/>
            <person name="Goyea E."/>
            <person name="Hou S."/>
            <person name="Levy A."/>
            <person name="Martinka S."/>
            <person name="Mead K."/>
            <person name="McLellan M.D."/>
            <person name="Meyer R."/>
            <person name="Randall-Maher J."/>
            <person name="Tomlinson C."/>
            <person name="Dauphin-Kohlberg S."/>
            <person name="Kozlowicz-Reilly A."/>
            <person name="Shah N."/>
            <person name="Swearengen-Shahid S."/>
            <person name="Snider J."/>
            <person name="Strong J.T."/>
            <person name="Thompson J."/>
            <person name="Yoakum M."/>
            <person name="Leonard S."/>
            <person name="Pearman C."/>
            <person name="Trani L."/>
            <person name="Radionenko M."/>
            <person name="Waligorski J.E."/>
            <person name="Wang C."/>
            <person name="Rock S.M."/>
            <person name="Tin-Wollam A.-M."/>
            <person name="Maupin R."/>
            <person name="Latreille P."/>
            <person name="Wendl M.C."/>
            <person name="Yang S.-P."/>
            <person name="Pohl C."/>
            <person name="Wallis J.W."/>
            <person name="Spieth J."/>
            <person name="Bieri T.A."/>
            <person name="Berkowicz N."/>
            <person name="Nelson J.O."/>
            <person name="Osborne J."/>
            <person name="Ding L."/>
            <person name="Meyer R."/>
            <person name="Sabo A."/>
            <person name="Shotland Y."/>
            <person name="Sinha P."/>
            <person name="Wohldmann P.E."/>
            <person name="Cook L.L."/>
            <person name="Hickenbotham M.T."/>
            <person name="Eldred J."/>
            <person name="Williams D."/>
            <person name="Jones T.A."/>
            <person name="She X."/>
            <person name="Ciccarelli F.D."/>
            <person name="Izaurralde E."/>
            <person name="Taylor J."/>
            <person name="Schmutz J."/>
            <person name="Myers R.M."/>
            <person name="Cox D.R."/>
            <person name="Huang X."/>
            <person name="McPherson J.D."/>
            <person name="Mardis E.R."/>
            <person name="Clifton S.W."/>
            <person name="Warren W.C."/>
            <person name="Chinwalla A.T."/>
            <person name="Eddy S.R."/>
            <person name="Marra M.A."/>
            <person name="Ovcharenko I."/>
            <person name="Furey T.S."/>
            <person name="Miller W."/>
            <person name="Eichler E.E."/>
            <person name="Bork P."/>
            <person name="Suyama M."/>
            <person name="Torrents D."/>
            <person name="Waterston R.H."/>
            <person name="Wilson R.K."/>
        </authorList>
    </citation>
    <scope>NUCLEOTIDE SEQUENCE [LARGE SCALE GENOMIC DNA]</scope>
</reference>
<reference key="3">
    <citation type="journal article" date="2004" name="Genome Res.">
        <title>The status, quality, and expansion of the NIH full-length cDNA project: the Mammalian Gene Collection (MGC).</title>
        <authorList>
            <consortium name="The MGC Project Team"/>
        </authorList>
    </citation>
    <scope>NUCLEOTIDE SEQUENCE [LARGE SCALE MRNA] OF 93-847 (ISOFORM 1)</scope>
    <scope>VARIANT VAL-467</scope>
    <source>
        <tissue>Eye</tissue>
    </source>
</reference>
<reference key="4">
    <citation type="journal article" date="2001" name="DNA Res.">
        <title>Prediction of the coding sequences of unidentified human genes. XX. The complete sequences of 100 new cDNA clones from brain which code for large proteins in vitro.</title>
        <authorList>
            <person name="Nagase T."/>
            <person name="Nakayama M."/>
            <person name="Nakajima D."/>
            <person name="Kikuno R."/>
            <person name="Ohara O."/>
        </authorList>
    </citation>
    <scope>NUCLEOTIDE SEQUENCE [LARGE SCALE MRNA] OF 142-847 (ISOFORM 1)</scope>
    <source>
        <tissue>Brain</tissue>
    </source>
</reference>
<reference key="5">
    <citation type="journal article" date="2009" name="Science">
        <title>Lysine acetylation targets protein complexes and co-regulates major cellular functions.</title>
        <authorList>
            <person name="Choudhary C."/>
            <person name="Kumar C."/>
            <person name="Gnad F."/>
            <person name="Nielsen M.L."/>
            <person name="Rehman M."/>
            <person name="Walther T.C."/>
            <person name="Olsen J.V."/>
            <person name="Mann M."/>
        </authorList>
    </citation>
    <scope>ACETYLATION [LARGE SCALE ANALYSIS] AT LYS-360</scope>
    <scope>IDENTIFICATION BY MASS SPECTROMETRY [LARGE SCALE ANALYSIS]</scope>
</reference>
<reference key="6">
    <citation type="journal article" date="2010" name="Biochem. Biophys. Res. Commun.">
        <title>Fast kinase domain-containing protein 3 is a mitochondrial protein essential for cellular respiration.</title>
        <authorList>
            <person name="Simarro M."/>
            <person name="Gimenez-Cassina A."/>
            <person name="Kedersha N."/>
            <person name="Lazaro J.B."/>
            <person name="Adelmant G.O."/>
            <person name="Marto J.A."/>
            <person name="Rhee K."/>
            <person name="Tisdale S."/>
            <person name="Danial N."/>
            <person name="Benarafa C."/>
            <person name="Orduna A."/>
            <person name="Anderson P."/>
        </authorList>
    </citation>
    <scope>SUBCELLULAR LOCATION</scope>
    <scope>TISSUE SPECIFICITY</scope>
</reference>
<reference key="7">
    <citation type="journal article" date="2017" name="Cell Chem. Biol.">
        <title>Proximity biotinylation as a method for mapping proteins associated with mtDNA in living cells.</title>
        <authorList>
            <person name="Han S."/>
            <person name="Udeshi N.D."/>
            <person name="Deerinck T.J."/>
            <person name="Svinkina T."/>
            <person name="Ellisman M.H."/>
            <person name="Carr S.A."/>
            <person name="Ting A.Y."/>
        </authorList>
    </citation>
    <scope>FUNCTION</scope>
    <scope>SUBCELLULAR LOCATION</scope>
    <scope>IDENTIFICATION BY MASS SPECTROMETRY</scope>
</reference>
<reference key="8">
    <citation type="journal article" date="2017" name="Nucleic Acids Res.">
        <title>FASTKD1 and FASTKD4 have opposite effects on expression of specific mitochondrial RNAs, depending upon their endonuclease-like RAP domain.</title>
        <authorList>
            <person name="Boehm E."/>
            <person name="Zaganelli S."/>
            <person name="Maundrell K."/>
            <person name="Jourdain A.A."/>
            <person name="Thore S."/>
            <person name="Martinou J.C."/>
        </authorList>
    </citation>
    <scope>SUBCELLULAR LOCATION</scope>
    <scope>FUNCTION</scope>
    <scope>DOMAIN</scope>
</reference>
<dbReference type="EMBL" id="AK025554">
    <property type="protein sequence ID" value="BAB15168.1"/>
    <property type="status" value="ALT_INIT"/>
    <property type="molecule type" value="mRNA"/>
</dbReference>
<dbReference type="EMBL" id="AK055892">
    <property type="protein sequence ID" value="BAB71037.1"/>
    <property type="molecule type" value="mRNA"/>
</dbReference>
<dbReference type="EMBL" id="AK074302">
    <property type="protein sequence ID" value="BAB85043.1"/>
    <property type="molecule type" value="mRNA"/>
</dbReference>
<dbReference type="EMBL" id="AC093899">
    <property type="protein sequence ID" value="AAY24118.1"/>
    <property type="molecule type" value="Genomic_DNA"/>
</dbReference>
<dbReference type="EMBL" id="BC032687">
    <property type="protein sequence ID" value="AAH32687.1"/>
    <property type="status" value="ALT_INIT"/>
    <property type="molecule type" value="mRNA"/>
</dbReference>
<dbReference type="EMBL" id="AB058703">
    <property type="protein sequence ID" value="BAB47429.1"/>
    <property type="molecule type" value="mRNA"/>
</dbReference>
<dbReference type="CCDS" id="CCDS33318.1">
    <molecule id="Q53R41-1"/>
</dbReference>
<dbReference type="CCDS" id="CCDS63051.1">
    <molecule id="Q53R41-2"/>
</dbReference>
<dbReference type="RefSeq" id="NP_001268405.1">
    <molecule id="Q53R41-2"/>
    <property type="nucleotide sequence ID" value="NM_001281476.3"/>
</dbReference>
<dbReference type="RefSeq" id="NP_001308975.1">
    <molecule id="Q53R41-1"/>
    <property type="nucleotide sequence ID" value="NM_001322046.2"/>
</dbReference>
<dbReference type="RefSeq" id="NP_001308977.1">
    <property type="nucleotide sequence ID" value="NM_001322048.1"/>
</dbReference>
<dbReference type="RefSeq" id="NP_001308978.1">
    <property type="nucleotide sequence ID" value="NM_001322049.1"/>
</dbReference>
<dbReference type="RefSeq" id="NP_078898.3">
    <molecule id="Q53R41-1"/>
    <property type="nucleotide sequence ID" value="NM_024622.5"/>
</dbReference>
<dbReference type="RefSeq" id="XP_016860400.1">
    <property type="nucleotide sequence ID" value="XM_017004911.1"/>
</dbReference>
<dbReference type="RefSeq" id="XP_047301787.1">
    <molecule id="Q53R41-2"/>
    <property type="nucleotide sequence ID" value="XM_047445831.1"/>
</dbReference>
<dbReference type="SMR" id="Q53R41"/>
<dbReference type="BioGRID" id="122800">
    <property type="interactions" value="122"/>
</dbReference>
<dbReference type="FunCoup" id="Q53R41">
    <property type="interactions" value="1287"/>
</dbReference>
<dbReference type="IntAct" id="Q53R41">
    <property type="interactions" value="102"/>
</dbReference>
<dbReference type="MINT" id="Q53R41"/>
<dbReference type="STRING" id="9606.ENSP00000400513"/>
<dbReference type="GlyGen" id="Q53R41">
    <property type="glycosylation" value="1 site, 1 O-linked glycan (1 site)"/>
</dbReference>
<dbReference type="iPTMnet" id="Q53R41"/>
<dbReference type="PhosphoSitePlus" id="Q53R41"/>
<dbReference type="SwissPalm" id="Q53R41"/>
<dbReference type="BioMuta" id="FASTKD1"/>
<dbReference type="DMDM" id="74726532"/>
<dbReference type="jPOST" id="Q53R41"/>
<dbReference type="MassIVE" id="Q53R41"/>
<dbReference type="PaxDb" id="9606-ENSP00000400513"/>
<dbReference type="PeptideAtlas" id="Q53R41"/>
<dbReference type="ProteomicsDB" id="62517">
    <molecule id="Q53R41-1"/>
</dbReference>
<dbReference type="ProteomicsDB" id="62518">
    <molecule id="Q53R41-2"/>
</dbReference>
<dbReference type="Pumba" id="Q53R41"/>
<dbReference type="Antibodypedia" id="33812">
    <property type="antibodies" value="132 antibodies from 22 providers"/>
</dbReference>
<dbReference type="DNASU" id="79675"/>
<dbReference type="Ensembl" id="ENST00000453153.7">
    <molecule id="Q53R41-1"/>
    <property type="protein sequence ID" value="ENSP00000400513.2"/>
    <property type="gene ID" value="ENSG00000138399.18"/>
</dbReference>
<dbReference type="Ensembl" id="ENST00000453929.6">
    <molecule id="Q53R41-2"/>
    <property type="protein sequence ID" value="ENSP00000403229.2"/>
    <property type="gene ID" value="ENSG00000138399.18"/>
</dbReference>
<dbReference type="GeneID" id="79675"/>
<dbReference type="KEGG" id="hsa:79675"/>
<dbReference type="MANE-Select" id="ENST00000453153.7">
    <property type="protein sequence ID" value="ENSP00000400513.2"/>
    <property type="RefSeq nucleotide sequence ID" value="NM_024622.6"/>
    <property type="RefSeq protein sequence ID" value="NP_078898.3"/>
</dbReference>
<dbReference type="UCSC" id="uc002uev.6">
    <molecule id="Q53R41-1"/>
    <property type="organism name" value="human"/>
</dbReference>
<dbReference type="AGR" id="HGNC:26150"/>
<dbReference type="CTD" id="79675"/>
<dbReference type="DisGeNET" id="79675"/>
<dbReference type="GeneCards" id="FASTKD1"/>
<dbReference type="HGNC" id="HGNC:26150">
    <property type="gene designation" value="FASTKD1"/>
</dbReference>
<dbReference type="HPA" id="ENSG00000138399">
    <property type="expression patterns" value="Low tissue specificity"/>
</dbReference>
<dbReference type="MalaCards" id="FASTKD1"/>
<dbReference type="MIM" id="617529">
    <property type="type" value="gene"/>
</dbReference>
<dbReference type="neXtProt" id="NX_Q53R41"/>
<dbReference type="OpenTargets" id="ENSG00000138399"/>
<dbReference type="PharmGKB" id="PA145148834"/>
<dbReference type="VEuPathDB" id="HostDB:ENSG00000138399"/>
<dbReference type="eggNOG" id="ENOG502QQ64">
    <property type="taxonomic scope" value="Eukaryota"/>
</dbReference>
<dbReference type="GeneTree" id="ENSGT01030000234607"/>
<dbReference type="HOGENOM" id="CLU_017819_0_0_1"/>
<dbReference type="InParanoid" id="Q53R41"/>
<dbReference type="OMA" id="FRPFSCE"/>
<dbReference type="OrthoDB" id="385235at2759"/>
<dbReference type="PAN-GO" id="Q53R41">
    <property type="GO annotations" value="5 GO annotations based on evolutionary models"/>
</dbReference>
<dbReference type="PhylomeDB" id="Q53R41"/>
<dbReference type="TreeFam" id="TF324885"/>
<dbReference type="PathwayCommons" id="Q53R41"/>
<dbReference type="SignaLink" id="Q53R41"/>
<dbReference type="BioGRID-ORCS" id="79675">
    <property type="hits" value="13 hits in 1160 CRISPR screens"/>
</dbReference>
<dbReference type="CD-CODE" id="5965E019">
    <property type="entry name" value="mtRNA granule"/>
</dbReference>
<dbReference type="ChiTaRS" id="FASTKD1">
    <property type="organism name" value="human"/>
</dbReference>
<dbReference type="GenomeRNAi" id="79675"/>
<dbReference type="Pharos" id="Q53R41">
    <property type="development level" value="Tbio"/>
</dbReference>
<dbReference type="PRO" id="PR:Q53R41"/>
<dbReference type="Proteomes" id="UP000005640">
    <property type="component" value="Chromosome 2"/>
</dbReference>
<dbReference type="RNAct" id="Q53R41">
    <property type="molecule type" value="protein"/>
</dbReference>
<dbReference type="Bgee" id="ENSG00000138399">
    <property type="expression patterns" value="Expressed in secondary oocyte and 204 other cell types or tissues"/>
</dbReference>
<dbReference type="ExpressionAtlas" id="Q53R41">
    <property type="expression patterns" value="baseline and differential"/>
</dbReference>
<dbReference type="GO" id="GO:0005759">
    <property type="term" value="C:mitochondrial matrix"/>
    <property type="evidence" value="ECO:0000318"/>
    <property type="project" value="GO_Central"/>
</dbReference>
<dbReference type="GO" id="GO:0005739">
    <property type="term" value="C:mitochondrion"/>
    <property type="evidence" value="ECO:0000314"/>
    <property type="project" value="HPA"/>
</dbReference>
<dbReference type="GO" id="GO:0005654">
    <property type="term" value="C:nucleoplasm"/>
    <property type="evidence" value="ECO:0000314"/>
    <property type="project" value="HPA"/>
</dbReference>
<dbReference type="GO" id="GO:0035770">
    <property type="term" value="C:ribonucleoprotein granule"/>
    <property type="evidence" value="ECO:0000318"/>
    <property type="project" value="GO_Central"/>
</dbReference>
<dbReference type="GO" id="GO:0003723">
    <property type="term" value="F:RNA binding"/>
    <property type="evidence" value="ECO:0007005"/>
    <property type="project" value="UniProtKB"/>
</dbReference>
<dbReference type="GO" id="GO:0000959">
    <property type="term" value="P:mitochondrial RNA metabolic process"/>
    <property type="evidence" value="ECO:0000315"/>
    <property type="project" value="UniProtKB"/>
</dbReference>
<dbReference type="GO" id="GO:0000963">
    <property type="term" value="P:mitochondrial RNA processing"/>
    <property type="evidence" value="ECO:0000318"/>
    <property type="project" value="GO_Central"/>
</dbReference>
<dbReference type="GO" id="GO:0044528">
    <property type="term" value="P:regulation of mitochondrial mRNA stability"/>
    <property type="evidence" value="ECO:0000315"/>
    <property type="project" value="UniProtKB"/>
</dbReference>
<dbReference type="InterPro" id="IPR013579">
    <property type="entry name" value="FAST_2"/>
</dbReference>
<dbReference type="InterPro" id="IPR050870">
    <property type="entry name" value="FAST_kinase"/>
</dbReference>
<dbReference type="InterPro" id="IPR010622">
    <property type="entry name" value="FAST_Leu-rich"/>
</dbReference>
<dbReference type="InterPro" id="IPR013584">
    <property type="entry name" value="RAP"/>
</dbReference>
<dbReference type="PANTHER" id="PTHR21228:SF29">
    <property type="entry name" value="FAST KINASE DOMAIN-CONTAINING PROTEIN 1, MITOCHONDRIAL"/>
    <property type="match status" value="1"/>
</dbReference>
<dbReference type="PANTHER" id="PTHR21228">
    <property type="entry name" value="FAST LEU-RICH DOMAIN-CONTAINING"/>
    <property type="match status" value="1"/>
</dbReference>
<dbReference type="Pfam" id="PF06743">
    <property type="entry name" value="FAST_1"/>
    <property type="match status" value="1"/>
</dbReference>
<dbReference type="Pfam" id="PF08368">
    <property type="entry name" value="FAST_2"/>
    <property type="match status" value="1"/>
</dbReference>
<dbReference type="Pfam" id="PF08373">
    <property type="entry name" value="RAP"/>
    <property type="match status" value="1"/>
</dbReference>
<dbReference type="SMART" id="SM00952">
    <property type="entry name" value="RAP"/>
    <property type="match status" value="1"/>
</dbReference>
<dbReference type="PROSITE" id="PS51286">
    <property type="entry name" value="RAP"/>
    <property type="match status" value="1"/>
</dbReference>
<keyword id="KW-0007">Acetylation</keyword>
<keyword id="KW-0025">Alternative splicing</keyword>
<keyword id="KW-0496">Mitochondrion</keyword>
<keyword id="KW-1267">Proteomics identification</keyword>
<keyword id="KW-1185">Reference proteome</keyword>
<keyword id="KW-0809">Transit peptide</keyword>
<gene>
    <name type="primary">FASTKD1</name>
    <name type="synonym">KIAA1800</name>
</gene>
<protein>
    <recommendedName>
        <fullName>FAST kinase domain-containing protein 1, mitochondrial</fullName>
    </recommendedName>
</protein>
<sequence length="847" mass="97411">MKKTPVFLESLVTNMLRLRAICPFSWRVFQFRPISCEPLIIQMNKCTDEEQMFGFIERNKAILSEKQVGCAFDMLWKLQKQKTSLLKNAEYVRDHPQFLTLHNLATNKFKLMNDDTLVNVLYVTQQFAGEAHDPLVEALVTEAWRRLERFDIKLLSEFSSCLADQHLYFSPLMGKIADIVHRNLETTQDLSSLSVLMVNISSLISRHFQQQLVNKTELLFDTIDSSEVNVAKSIAKFLRNVRYRYQPLLERCNNVFLSNVDHLDLDSISKILSVYKFLQFNSFEFIIMAKKKLTEMIPLCNHPASFVKLFVALGPIAGPEEKKQLKSTMLLMSEDLTGEQALAVLGAMGDMESRNSCLIKRVTSVLHKHLDGYKPLELLKITQELTFLHFQRKEFFAKLRELLLSYLKNSFIPTEVSVLVRAISLLPSPHLDEVGISRIEAVLPQCDLNNLSSFATSVLRWIQHDHMYLDNMTAKQLKLLQKLDHYGRQRLQHSNSLDLLRKELKSLKGNTFPESLLEEMIATLQHFMDDINYINVGEIASFISSTDYLSTLLLDRIASVAVQQIEKIHPFTIPAIIRPFSVLNYDPPQRDEFLGTCVQHLNSYLGILDPFILVFLGFSLATLEYFPEDLLKAIFNIKFLARLDSQLEILSPSRSARVQFHLMELNRSVCLECPEFQIPWFHDRFCQQYNKGIGGMDGTQQQIFKMLAEVLGGINCVKASVLTPYYHKVDFECILDKRKKPLPYGSHNIALGQLPEMPWESNIEIVGSRLPPGAERIALEFLDSKALCRNIPHMKGKSAMKKRHLEILGYRVIQISQFEWNSMALSTKDARMDYLRECIFGEVKSCL</sequence>